<keyword id="KW-0027">Amidation</keyword>
<keyword id="KW-0878">Amphibian defense peptide</keyword>
<keyword id="KW-0044">Antibiotic</keyword>
<keyword id="KW-0929">Antimicrobial</keyword>
<keyword id="KW-0165">Cleavage on pair of basic residues</keyword>
<keyword id="KW-0204">Cytolysis</keyword>
<keyword id="KW-0903">Direct protein sequencing</keyword>
<keyword id="KW-0295">Fungicide</keyword>
<keyword id="KW-0354">Hemolysis</keyword>
<keyword id="KW-0964">Secreted</keyword>
<keyword id="KW-0732">Signal</keyword>
<name>M8H7_BOMMX</name>
<comment type="function">
    <text evidence="1">Maximin-8 shows antimicrobial activity against bacteria and against the fungus C.albicans. It has little hemolytic activity (By similarity).</text>
</comment>
<comment type="function">
    <text evidence="1">Maximin-H7 shows antimicrobial activity against bacteria and against the fungus C.albicans. Shows strong hemolytic activity (By similarity).</text>
</comment>
<comment type="subcellular location">
    <subcellularLocation>
        <location>Secreted</location>
    </subcellularLocation>
</comment>
<comment type="tissue specificity">
    <text>Expressed by the skin glands.</text>
</comment>
<comment type="similarity">
    <text evidence="4">Belongs to the bombinin family.</text>
</comment>
<sequence>MKFKYIVAVSFLIASAYARSEENDEQSLSQRDVLEEESLREIRGIGTKILGGLKTAVKGALKELASTYVNGKRTAEDHEVMKRLEAVMRDLDSLDYPEEASERETRGFNQEEIANLFTKKEKRILGPVIKTIGGVIGGLLKNLG</sequence>
<evidence type="ECO:0000250" key="1"/>
<evidence type="ECO:0000255" key="2"/>
<evidence type="ECO:0000269" key="3">
    <source>
    </source>
</evidence>
<evidence type="ECO:0000305" key="4"/>
<protein>
    <recommendedName>
        <fullName>Maximins 8/H7</fullName>
    </recommendedName>
    <component>
        <recommendedName>
            <fullName>Maximin-8</fullName>
        </recommendedName>
    </component>
    <component>
        <recommendedName>
            <fullName>Maximin-H7</fullName>
        </recommendedName>
    </component>
</protein>
<dbReference type="EMBL" id="AY849004">
    <property type="protein sequence ID" value="AAX50225.1"/>
    <property type="molecule type" value="mRNA"/>
</dbReference>
<dbReference type="SMR" id="Q58T56"/>
<dbReference type="GO" id="GO:0005576">
    <property type="term" value="C:extracellular region"/>
    <property type="evidence" value="ECO:0007669"/>
    <property type="project" value="UniProtKB-SubCell"/>
</dbReference>
<dbReference type="GO" id="GO:0042742">
    <property type="term" value="P:defense response to bacterium"/>
    <property type="evidence" value="ECO:0007669"/>
    <property type="project" value="UniProtKB-KW"/>
</dbReference>
<dbReference type="GO" id="GO:0050832">
    <property type="term" value="P:defense response to fungus"/>
    <property type="evidence" value="ECO:0007669"/>
    <property type="project" value="UniProtKB-KW"/>
</dbReference>
<dbReference type="GO" id="GO:0031640">
    <property type="term" value="P:killing of cells of another organism"/>
    <property type="evidence" value="ECO:0007669"/>
    <property type="project" value="UniProtKB-KW"/>
</dbReference>
<dbReference type="InterPro" id="IPR007962">
    <property type="entry name" value="Bombinin"/>
</dbReference>
<dbReference type="Pfam" id="PF05298">
    <property type="entry name" value="Bombinin"/>
    <property type="match status" value="1"/>
</dbReference>
<organism>
    <name type="scientific">Bombina maxima</name>
    <name type="common">Giant fire-bellied toad</name>
    <name type="synonym">Chinese red belly toad</name>
    <dbReference type="NCBI Taxonomy" id="161274"/>
    <lineage>
        <taxon>Eukaryota</taxon>
        <taxon>Metazoa</taxon>
        <taxon>Chordata</taxon>
        <taxon>Craniata</taxon>
        <taxon>Vertebrata</taxon>
        <taxon>Euteleostomi</taxon>
        <taxon>Amphibia</taxon>
        <taxon>Batrachia</taxon>
        <taxon>Anura</taxon>
        <taxon>Bombinatoridae</taxon>
        <taxon>Bombina</taxon>
    </lineage>
</organism>
<proteinExistence type="evidence at protein level"/>
<feature type="signal peptide" evidence="2">
    <location>
        <begin position="1"/>
        <end position="18"/>
    </location>
</feature>
<feature type="propeptide" id="PRO_0000003212" evidence="1">
    <location>
        <begin position="19"/>
        <end position="43"/>
    </location>
</feature>
<feature type="peptide" id="PRO_0000003213" description="Maximin-8">
    <location>
        <begin position="44"/>
        <end position="70"/>
    </location>
</feature>
<feature type="propeptide" id="PRO_0000003214" evidence="1">
    <location>
        <begin position="74"/>
        <end position="123"/>
    </location>
</feature>
<feature type="peptide" id="PRO_0000003215" description="Maximin-H7">
    <location>
        <begin position="124"/>
        <end position="143"/>
    </location>
</feature>
<feature type="modified residue" description="Asparagine amide" evidence="3">
    <location>
        <position position="70"/>
    </location>
</feature>
<feature type="modified residue" description="Leucine amide" evidence="3">
    <location>
        <position position="143"/>
    </location>
</feature>
<accession>Q58T56</accession>
<reference key="1">
    <citation type="journal article" date="2005" name="Eur. J. Immunol.">
        <title>Variety of antimicrobial peptides in the Bombina maxima toad and evidence of their rapid diversification.</title>
        <authorList>
            <person name="Lee W.-H."/>
            <person name="Li Y."/>
            <person name="Lai R."/>
            <person name="Li S."/>
            <person name="Zhang Y."/>
            <person name="Wang W."/>
        </authorList>
    </citation>
    <scope>NUCLEOTIDE SEQUENCE [MRNA]</scope>
    <scope>PROTEIN SEQUENCE OF 44-70 AND 124-143</scope>
    <scope>AMIDATION AT ASN-70 AND LEU-143</scope>
    <source>
        <tissue>Skin</tissue>
    </source>
</reference>